<protein>
    <recommendedName>
        <fullName evidence="5">Electron transfer flavoprotein subunit beta</fullName>
        <shortName evidence="1">Beta-ETF</shortName>
    </recommendedName>
</protein>
<sequence>MAELRALVAVKRVIDFAVKIRVKPDRTGVVMDGVKHSMNPFCEIAVEEAVRLKEKKLVKEVIAVSCGPAQCQETIRTALAMGADRGIHVEVPAAEAHHLGPLQVARVLAKLAQKEKVDLVLLGKQAIDDDCNQTGQMTAGFLDWPQGTFASQVTLEGDKVKVEREIDGGLETLRLKLPAVVTADLRLNEPRYATLPNIMKAKKKKIEVIKAGDLGVDLTSKLSVVSVEDPPQRVAGVKVETTEDLVAKLREIGRI</sequence>
<feature type="initiator methionine" description="Removed" evidence="2">
    <location>
        <position position="1"/>
    </location>
</feature>
<feature type="chain" id="PRO_0000231525" description="Electron transfer flavoprotein subunit beta">
    <location>
        <begin position="2"/>
        <end position="255"/>
    </location>
</feature>
<feature type="region of interest" description="Recognition loop" evidence="1">
    <location>
        <begin position="183"/>
        <end position="205"/>
    </location>
</feature>
<feature type="binding site" evidence="1">
    <location>
        <position position="9"/>
    </location>
    <ligand>
        <name>AMP</name>
        <dbReference type="ChEBI" id="CHEBI:456215"/>
    </ligand>
</feature>
<feature type="binding site" evidence="1">
    <location>
        <begin position="39"/>
        <end position="42"/>
    </location>
    <ligand>
        <name>AMP</name>
        <dbReference type="ChEBI" id="CHEBI:456215"/>
    </ligand>
</feature>
<feature type="binding site" evidence="1">
    <location>
        <position position="66"/>
    </location>
    <ligand>
        <name>AMP</name>
        <dbReference type="ChEBI" id="CHEBI:456215"/>
    </ligand>
</feature>
<feature type="binding site" evidence="1">
    <location>
        <begin position="123"/>
        <end position="134"/>
    </location>
    <ligand>
        <name>AMP</name>
        <dbReference type="ChEBI" id="CHEBI:456215"/>
    </ligand>
</feature>
<feature type="modified residue" description="N-acetylalanine" evidence="2">
    <location>
        <position position="2"/>
    </location>
</feature>
<feature type="modified residue" description="N6,N6,N6-trimethyllysine; by ETFBKMT; alternate" evidence="2">
    <location>
        <position position="200"/>
    </location>
</feature>
<feature type="modified residue" description="N6-acetyllysine; alternate" evidence="3">
    <location>
        <position position="200"/>
    </location>
</feature>
<feature type="modified residue" description="N6-methyllysine; alternate" evidence="1">
    <location>
        <position position="200"/>
    </location>
</feature>
<feature type="modified residue" description="N6,N6,N6-trimethyllysine; by ETFBKMT" evidence="2">
    <location>
        <position position="203"/>
    </location>
</feature>
<feature type="modified residue" description="N6-acetyllysine; alternate" evidence="3">
    <location>
        <position position="210"/>
    </location>
</feature>
<feature type="modified residue" description="N6-succinyllysine; alternate" evidence="3">
    <location>
        <position position="210"/>
    </location>
</feature>
<feature type="modified residue" description="Phosphoserine" evidence="1">
    <location>
        <position position="223"/>
    </location>
</feature>
<feature type="modified residue" description="Phosphoserine" evidence="1">
    <location>
        <position position="226"/>
    </location>
</feature>
<feature type="modified residue" description="N6-acetyllysine" evidence="3">
    <location>
        <position position="238"/>
    </location>
</feature>
<feature type="modified residue" description="N6-acetyllysine; alternate" evidence="3">
    <location>
        <position position="248"/>
    </location>
</feature>
<feature type="modified residue" description="N6-succinyllysine; alternate" evidence="3">
    <location>
        <position position="248"/>
    </location>
</feature>
<reference key="1">
    <citation type="submission" date="2003-08" db="EMBL/GenBank/DDBJ databases">
        <title>Cloning of cDNAs encoding the mature form of porcine electron transfer flavoprotein alpha and beta subunits.</title>
        <authorList>
            <person name="Mohsen A.-W.A."/>
            <person name="Hoard H."/>
            <person name="Daniels J.K."/>
            <person name="Anderson B.D."/>
            <person name="Willard J.M.A."/>
            <person name="Keller D.M."/>
            <person name="Vockley J."/>
        </authorList>
    </citation>
    <scope>NUCLEOTIDE SEQUENCE [MRNA]</scope>
    <source>
        <tissue>Liver</tissue>
    </source>
</reference>
<reference key="2">
    <citation type="journal article" date="1983" name="Biochem. J.">
        <title>Electron transfer flavoprotein from pig liver mitochondria. A simple purification and re-evaluation of some of the molecular properties.</title>
        <authorList>
            <person name="Husain M."/>
            <person name="Steenkamp D.J."/>
        </authorList>
    </citation>
    <scope>SUBCELLULAR LOCATION</scope>
    <scope>SUBUNIT</scope>
</reference>
<keyword id="KW-0007">Acetylation</keyword>
<keyword id="KW-0249">Electron transport</keyword>
<keyword id="KW-0488">Methylation</keyword>
<keyword id="KW-0496">Mitochondrion</keyword>
<keyword id="KW-0547">Nucleotide-binding</keyword>
<keyword id="KW-0597">Phosphoprotein</keyword>
<keyword id="KW-1185">Reference proteome</keyword>
<keyword id="KW-0813">Transport</keyword>
<organism>
    <name type="scientific">Sus scrofa</name>
    <name type="common">Pig</name>
    <dbReference type="NCBI Taxonomy" id="9823"/>
    <lineage>
        <taxon>Eukaryota</taxon>
        <taxon>Metazoa</taxon>
        <taxon>Chordata</taxon>
        <taxon>Craniata</taxon>
        <taxon>Vertebrata</taxon>
        <taxon>Euteleostomi</taxon>
        <taxon>Mammalia</taxon>
        <taxon>Eutheria</taxon>
        <taxon>Laurasiatheria</taxon>
        <taxon>Artiodactyla</taxon>
        <taxon>Suina</taxon>
        <taxon>Suidae</taxon>
        <taxon>Sus</taxon>
    </lineage>
</organism>
<proteinExistence type="evidence at protein level"/>
<gene>
    <name evidence="1" type="primary">ETFB</name>
</gene>
<dbReference type="EMBL" id="AY374470">
    <property type="protein sequence ID" value="AAQ84565.1"/>
    <property type="molecule type" value="mRNA"/>
</dbReference>
<dbReference type="RefSeq" id="NP_001192208.1">
    <property type="nucleotide sequence ID" value="NM_001205279.1"/>
</dbReference>
<dbReference type="SMR" id="Q6UAQ8"/>
<dbReference type="FunCoup" id="Q6UAQ8">
    <property type="interactions" value="1374"/>
</dbReference>
<dbReference type="STRING" id="9823.ENSSSCP00000003505"/>
<dbReference type="PaxDb" id="9823-ENSSSCP00000003505"/>
<dbReference type="PeptideAtlas" id="Q6UAQ8"/>
<dbReference type="Ensembl" id="ENSSSCT00000003588.5">
    <property type="protein sequence ID" value="ENSSSCP00000003505.2"/>
    <property type="gene ID" value="ENSSSCG00000003229.6"/>
</dbReference>
<dbReference type="Ensembl" id="ENSSSCT00015032774.1">
    <property type="protein sequence ID" value="ENSSSCP00015013004.1"/>
    <property type="gene ID" value="ENSSSCG00015024715.1"/>
</dbReference>
<dbReference type="Ensembl" id="ENSSSCT00025036328.1">
    <property type="protein sequence ID" value="ENSSSCP00025015187.1"/>
    <property type="gene ID" value="ENSSSCG00025026830.1"/>
</dbReference>
<dbReference type="Ensembl" id="ENSSSCT00030000167.1">
    <property type="protein sequence ID" value="ENSSSCP00030000143.1"/>
    <property type="gene ID" value="ENSSSCG00030000084.1"/>
</dbReference>
<dbReference type="Ensembl" id="ENSSSCT00035072688.1">
    <property type="protein sequence ID" value="ENSSSCP00035029488.1"/>
    <property type="gene ID" value="ENSSSCG00035054483.1"/>
</dbReference>
<dbReference type="Ensembl" id="ENSSSCT00040029520.1">
    <property type="protein sequence ID" value="ENSSSCP00040012348.1"/>
    <property type="gene ID" value="ENSSSCG00040022011.1"/>
</dbReference>
<dbReference type="Ensembl" id="ENSSSCT00045014580.1">
    <property type="protein sequence ID" value="ENSSSCP00045010115.1"/>
    <property type="gene ID" value="ENSSSCG00045008640.1"/>
</dbReference>
<dbReference type="Ensembl" id="ENSSSCT00050070941.1">
    <property type="protein sequence ID" value="ENSSSCP00050030498.1"/>
    <property type="gene ID" value="ENSSSCG00050052088.1"/>
</dbReference>
<dbReference type="Ensembl" id="ENSSSCT00055011322.1">
    <property type="protein sequence ID" value="ENSSSCP00055008945.1"/>
    <property type="gene ID" value="ENSSSCG00055005814.1"/>
</dbReference>
<dbReference type="Ensembl" id="ENSSSCT00060024382.1">
    <property type="protein sequence ID" value="ENSSSCP00060010243.1"/>
    <property type="gene ID" value="ENSSSCG00060018172.1"/>
</dbReference>
<dbReference type="Ensembl" id="ENSSSCT00065107826.1">
    <property type="protein sequence ID" value="ENSSSCP00065048094.1"/>
    <property type="gene ID" value="ENSSSCG00065077928.1"/>
</dbReference>
<dbReference type="Ensembl" id="ENSSSCT00070050545.1">
    <property type="protein sequence ID" value="ENSSSCP00070042720.1"/>
    <property type="gene ID" value="ENSSSCG00070025281.1"/>
</dbReference>
<dbReference type="Ensembl" id="ENSSSCT00110064953">
    <property type="protein sequence ID" value="ENSSSCP00110045600"/>
    <property type="gene ID" value="ENSSSCG00110034111"/>
</dbReference>
<dbReference type="Ensembl" id="ENSSSCT00115033871">
    <property type="protein sequence ID" value="ENSSSCP00115032148"/>
    <property type="gene ID" value="ENSSSCG00115019118"/>
</dbReference>
<dbReference type="GeneID" id="396614"/>
<dbReference type="KEGG" id="ssc:396614"/>
<dbReference type="CTD" id="2109"/>
<dbReference type="VGNC" id="VGNC:87802">
    <property type="gene designation" value="ETFB"/>
</dbReference>
<dbReference type="eggNOG" id="KOG3180">
    <property type="taxonomic scope" value="Eukaryota"/>
</dbReference>
<dbReference type="GeneTree" id="ENSGT00390000009936"/>
<dbReference type="HOGENOM" id="CLU_060196_0_0_1"/>
<dbReference type="InParanoid" id="Q6UAQ8"/>
<dbReference type="OMA" id="EINQPRI"/>
<dbReference type="OrthoDB" id="276685at2759"/>
<dbReference type="TreeFam" id="TF314039"/>
<dbReference type="Reactome" id="R-SSC-611105">
    <property type="pathway name" value="Respiratory electron transport"/>
</dbReference>
<dbReference type="Reactome" id="R-SSC-8876725">
    <property type="pathway name" value="Protein methylation"/>
</dbReference>
<dbReference type="Proteomes" id="UP000008227">
    <property type="component" value="Chromosome 6"/>
</dbReference>
<dbReference type="Proteomes" id="UP000314985">
    <property type="component" value="Unassembled WGS sequence"/>
</dbReference>
<dbReference type="Proteomes" id="UP000694570">
    <property type="component" value="Unplaced"/>
</dbReference>
<dbReference type="Proteomes" id="UP000694571">
    <property type="component" value="Unplaced"/>
</dbReference>
<dbReference type="Proteomes" id="UP000694720">
    <property type="component" value="Unplaced"/>
</dbReference>
<dbReference type="Proteomes" id="UP000694722">
    <property type="component" value="Unplaced"/>
</dbReference>
<dbReference type="Proteomes" id="UP000694723">
    <property type="component" value="Unplaced"/>
</dbReference>
<dbReference type="Proteomes" id="UP000694724">
    <property type="component" value="Unplaced"/>
</dbReference>
<dbReference type="Proteomes" id="UP000694725">
    <property type="component" value="Unplaced"/>
</dbReference>
<dbReference type="Proteomes" id="UP000694726">
    <property type="component" value="Unplaced"/>
</dbReference>
<dbReference type="Proteomes" id="UP000694727">
    <property type="component" value="Unplaced"/>
</dbReference>
<dbReference type="Proteomes" id="UP000694728">
    <property type="component" value="Unplaced"/>
</dbReference>
<dbReference type="Bgee" id="ENSSSCG00000003229">
    <property type="expression patterns" value="Expressed in psoas major muscle and 47 other cell types or tissues"/>
</dbReference>
<dbReference type="ExpressionAtlas" id="Q6UAQ8">
    <property type="expression patterns" value="baseline"/>
</dbReference>
<dbReference type="GO" id="GO:0045251">
    <property type="term" value="C:electron transfer flavoprotein complex"/>
    <property type="evidence" value="ECO:0007669"/>
    <property type="project" value="Ensembl"/>
</dbReference>
<dbReference type="GO" id="GO:0005759">
    <property type="term" value="C:mitochondrial matrix"/>
    <property type="evidence" value="ECO:0000250"/>
    <property type="project" value="UniProtKB"/>
</dbReference>
<dbReference type="GO" id="GO:0005739">
    <property type="term" value="C:mitochondrion"/>
    <property type="evidence" value="ECO:0000318"/>
    <property type="project" value="GO_Central"/>
</dbReference>
<dbReference type="GO" id="GO:0009055">
    <property type="term" value="F:electron transfer activity"/>
    <property type="evidence" value="ECO:0000250"/>
    <property type="project" value="UniProtKB"/>
</dbReference>
<dbReference type="GO" id="GO:0000166">
    <property type="term" value="F:nucleotide binding"/>
    <property type="evidence" value="ECO:0007669"/>
    <property type="project" value="UniProtKB-KW"/>
</dbReference>
<dbReference type="GO" id="GO:0009063">
    <property type="term" value="P:amino acid catabolic process"/>
    <property type="evidence" value="ECO:0007669"/>
    <property type="project" value="Ensembl"/>
</dbReference>
<dbReference type="GO" id="GO:0033539">
    <property type="term" value="P:fatty acid beta-oxidation using acyl-CoA dehydrogenase"/>
    <property type="evidence" value="ECO:0000250"/>
    <property type="project" value="UniProtKB"/>
</dbReference>
<dbReference type="GO" id="GO:0022904">
    <property type="term" value="P:respiratory electron transport chain"/>
    <property type="evidence" value="ECO:0007669"/>
    <property type="project" value="Ensembl"/>
</dbReference>
<dbReference type="CDD" id="cd01714">
    <property type="entry name" value="ETF_beta"/>
    <property type="match status" value="1"/>
</dbReference>
<dbReference type="FunFam" id="3.40.50.620:FF:000011">
    <property type="entry name" value="Electron transfer flavoprotein subunit beta"/>
    <property type="match status" value="1"/>
</dbReference>
<dbReference type="Gene3D" id="3.40.50.620">
    <property type="entry name" value="HUPs"/>
    <property type="match status" value="1"/>
</dbReference>
<dbReference type="InterPro" id="IPR000049">
    <property type="entry name" value="ET-Flavoprotein_bsu_CS"/>
</dbReference>
<dbReference type="InterPro" id="IPR014730">
    <property type="entry name" value="ETF_a/b_N"/>
</dbReference>
<dbReference type="InterPro" id="IPR012255">
    <property type="entry name" value="ETF_b"/>
</dbReference>
<dbReference type="InterPro" id="IPR033948">
    <property type="entry name" value="ETF_beta_N"/>
</dbReference>
<dbReference type="InterPro" id="IPR014729">
    <property type="entry name" value="Rossmann-like_a/b/a_fold"/>
</dbReference>
<dbReference type="PANTHER" id="PTHR21294">
    <property type="entry name" value="ELECTRON TRANSFER FLAVOPROTEIN BETA-SUBUNIT"/>
    <property type="match status" value="1"/>
</dbReference>
<dbReference type="PANTHER" id="PTHR21294:SF8">
    <property type="entry name" value="ELECTRON TRANSFER FLAVOPROTEIN SUBUNIT BETA"/>
    <property type="match status" value="1"/>
</dbReference>
<dbReference type="Pfam" id="PF01012">
    <property type="entry name" value="ETF"/>
    <property type="match status" value="1"/>
</dbReference>
<dbReference type="PIRSF" id="PIRSF000090">
    <property type="entry name" value="Beta-ETF"/>
    <property type="match status" value="1"/>
</dbReference>
<dbReference type="SMART" id="SM00893">
    <property type="entry name" value="ETF"/>
    <property type="match status" value="1"/>
</dbReference>
<dbReference type="SUPFAM" id="SSF52402">
    <property type="entry name" value="Adenine nucleotide alpha hydrolases-like"/>
    <property type="match status" value="1"/>
</dbReference>
<dbReference type="PROSITE" id="PS01065">
    <property type="entry name" value="ETF_BETA"/>
    <property type="match status" value="1"/>
</dbReference>
<comment type="function">
    <text evidence="1">Heterodimeric electron transfer flavoprotein that accepts electrons from several mitochondrial dehydrogenases, including acyl-CoA dehydrogenases, glutaryl-CoA and sarcosine dehydrogenase. It transfers the electrons to the main mitochondrial respiratory chain via ETF-ubiquinone oxidoreductase. Required for normal mitochondrial fatty acid oxidation and normal amino acid metabolism. ETFB binds an AMP molecule that probably has a purely structural role.</text>
</comment>
<comment type="subunit">
    <text evidence="1 4">Heterodimer composed of ETFA and ETFB (PubMed:6847633). Identified in a complex that contains ETFA, ETFB and ETFRF1. Interacts with ACADM (By similarity).</text>
</comment>
<comment type="subcellular location">
    <subcellularLocation>
        <location evidence="6">Mitochondrion matrix</location>
    </subcellularLocation>
</comment>
<comment type="domain">
    <text evidence="1">The recognition loop recognizes a hydrophobic patch at the surface of interacting dehydrogenases and acts as a static anchor at the interface.</text>
</comment>
<comment type="PTM">
    <text evidence="1">Methylated. Trimethylation at Lys-200 and Lys-203 may negatively regulate the activity in electron transfer from acyl-CoA dehydrogenases.</text>
</comment>
<comment type="similarity">
    <text evidence="5">Belongs to the ETF beta-subunit/FixA family.</text>
</comment>
<name>ETFB_PIG</name>
<evidence type="ECO:0000250" key="1">
    <source>
        <dbReference type="UniProtKB" id="P38117"/>
    </source>
</evidence>
<evidence type="ECO:0000250" key="2">
    <source>
        <dbReference type="UniProtKB" id="Q2TBV3"/>
    </source>
</evidence>
<evidence type="ECO:0000250" key="3">
    <source>
        <dbReference type="UniProtKB" id="Q9DCW4"/>
    </source>
</evidence>
<evidence type="ECO:0000269" key="4">
    <source>
    </source>
</evidence>
<evidence type="ECO:0000305" key="5"/>
<evidence type="ECO:0000305" key="6">
    <source>
    </source>
</evidence>
<accession>Q6UAQ8</accession>